<name>KA171_OLIMR</name>
<proteinExistence type="evidence at protein level"/>
<keyword id="KW-0002">3D-structure</keyword>
<keyword id="KW-0027">Amidation</keyword>
<keyword id="KW-0903">Direct protein sequencing</keyword>
<keyword id="KW-1015">Disulfide bond</keyword>
<keyword id="KW-0872">Ion channel impairing toxin</keyword>
<keyword id="KW-0528">Neurotoxin</keyword>
<keyword id="KW-0632">Potassium channel impairing toxin</keyword>
<keyword id="KW-0873">Pyrrolidone carboxylic acid</keyword>
<keyword id="KW-0964">Secreted</keyword>
<keyword id="KW-0732">Signal</keyword>
<keyword id="KW-0800">Toxin</keyword>
<feature type="signal peptide" evidence="1">
    <location>
        <begin position="1"/>
        <end position="23"/>
    </location>
</feature>
<feature type="peptide" id="PRO_0000035336" description="Potassium channel toxin alpha-KTx 17.1">
    <location>
        <begin position="24"/>
        <end position="53"/>
    </location>
</feature>
<feature type="modified residue" description="Pyrrolidone carboxylic acid" evidence="2">
    <location>
        <position position="24"/>
    </location>
</feature>
<feature type="modified residue" description="Threonine amide" evidence="1">
    <location>
        <position position="53"/>
    </location>
</feature>
<feature type="disulfide bond" evidence="2">
    <location>
        <begin position="27"/>
        <end position="43"/>
    </location>
</feature>
<feature type="disulfide bond" evidence="2">
    <location>
        <begin position="33"/>
        <end position="48"/>
    </location>
</feature>
<feature type="disulfide bond" evidence="2">
    <location>
        <begin position="37"/>
        <end position="50"/>
    </location>
</feature>
<feature type="sequence conflict" description="In Ref. 2; AAV59462." evidence="3" ref="2">
    <original>L</original>
    <variation>F</variation>
    <location>
        <position position="13"/>
    </location>
</feature>
<feature type="sequence conflict" description="In Ref. 2; AAV59462." evidence="3" ref="2">
    <original>G</original>
    <variation>R</variation>
    <location>
        <position position="54"/>
    </location>
</feature>
<feature type="helix" evidence="4">
    <location>
        <begin position="30"/>
        <end position="36"/>
    </location>
</feature>
<feature type="strand" evidence="4">
    <location>
        <begin position="38"/>
        <end position="44"/>
    </location>
</feature>
<feature type="strand" evidence="4">
    <location>
        <begin position="47"/>
        <end position="51"/>
    </location>
</feature>
<protein>
    <recommendedName>
        <fullName>Potassium channel toxin alpha-KTx 17.1</fullName>
    </recommendedName>
    <alternativeName>
        <fullName>BmKK4</fullName>
    </alternativeName>
    <alternativeName>
        <fullName>Toxin Kk4</fullName>
    </alternativeName>
    <alternativeName>
        <fullName>Toxin TXKs4</fullName>
    </alternativeName>
</protein>
<organism>
    <name type="scientific">Olivierus martensii</name>
    <name type="common">Manchurian scorpion</name>
    <name type="synonym">Mesobuthus martensii</name>
    <dbReference type="NCBI Taxonomy" id="34649"/>
    <lineage>
        <taxon>Eukaryota</taxon>
        <taxon>Metazoa</taxon>
        <taxon>Ecdysozoa</taxon>
        <taxon>Arthropoda</taxon>
        <taxon>Chelicerata</taxon>
        <taxon>Arachnida</taxon>
        <taxon>Scorpiones</taxon>
        <taxon>Buthida</taxon>
        <taxon>Buthoidea</taxon>
        <taxon>Buthidae</taxon>
        <taxon>Olivierus</taxon>
    </lineage>
</organism>
<evidence type="ECO:0000269" key="1">
    <source>
    </source>
</evidence>
<evidence type="ECO:0000269" key="2">
    <source>
    </source>
</evidence>
<evidence type="ECO:0000305" key="3"/>
<evidence type="ECO:0007829" key="4">
    <source>
        <dbReference type="PDB" id="1S8K"/>
    </source>
</evidence>
<dbReference type="EMBL" id="AJ277729">
    <property type="protein sequence ID" value="CAC38038.1"/>
    <property type="molecule type" value="mRNA"/>
</dbReference>
<dbReference type="EMBL" id="AF159974">
    <property type="protein sequence ID" value="AAK61821.1"/>
    <property type="molecule type" value="mRNA"/>
</dbReference>
<dbReference type="EMBL" id="AY647145">
    <property type="protein sequence ID" value="AAV59462.1"/>
    <property type="molecule type" value="Genomic_DNA"/>
</dbReference>
<dbReference type="PDB" id="1S8K">
    <property type="method" value="NMR"/>
    <property type="chains" value="A=24-53"/>
</dbReference>
<dbReference type="PDBsum" id="1S8K"/>
<dbReference type="BMRB" id="Q95NJ8"/>
<dbReference type="SMR" id="Q95NJ8"/>
<dbReference type="EvolutionaryTrace" id="Q95NJ8"/>
<dbReference type="GO" id="GO:0005576">
    <property type="term" value="C:extracellular region"/>
    <property type="evidence" value="ECO:0007669"/>
    <property type="project" value="UniProtKB-SubCell"/>
</dbReference>
<dbReference type="GO" id="GO:0015459">
    <property type="term" value="F:potassium channel regulator activity"/>
    <property type="evidence" value="ECO:0007669"/>
    <property type="project" value="UniProtKB-KW"/>
</dbReference>
<dbReference type="GO" id="GO:0090729">
    <property type="term" value="F:toxin activity"/>
    <property type="evidence" value="ECO:0007669"/>
    <property type="project" value="UniProtKB-KW"/>
</dbReference>
<comment type="function">
    <text evidence="1">Blocker of potassium channels, which inhibits both the delayed rectifier and fast transient potassium current. The inhibition is reversible and voltage-independent. It causes a depolarizing shift of the steady-state activation curve of the currents, without changing their steady-state inactivation behavior.</text>
</comment>
<comment type="subcellular location">
    <subcellularLocation>
        <location>Secreted</location>
    </subcellularLocation>
</comment>
<comment type="tissue specificity">
    <text>Expressed by the venom gland.</text>
</comment>
<comment type="domain">
    <text>Has the structural arrangement of an alpha-helix connected to a beta-sheet by disulfide bonds (CSalpha/beta).</text>
</comment>
<comment type="similarity">
    <text evidence="3">Belongs to the short scorpion toxin superfamily. Potassium channel inhibitor family. Alpha-KTx 17 subfamily.</text>
</comment>
<reference key="1">
    <citation type="journal article" date="2001" name="Biochimie">
        <title>Molecular cloning and characterization of four scorpion K(+)-toxin-like peptides: a new subfamily of venom peptides (alpha-KTx14) and genomic analysis of a member.</title>
        <authorList>
            <person name="Zeng X.-C."/>
            <person name="Peng F."/>
            <person name="Luo F."/>
            <person name="Zhu S.-Y."/>
            <person name="Liu H."/>
            <person name="Li W.-X."/>
        </authorList>
    </citation>
    <scope>NUCLEOTIDE SEQUENCE [MRNA]</scope>
    <source>
        <tissue>Venom gland</tissue>
    </source>
</reference>
<reference key="2">
    <citation type="submission" date="1999-06" db="EMBL/GenBank/DDBJ databases">
        <title>Full-length cDNA encoding a putative K+ channel blocker from BmK.</title>
        <authorList>
            <person name="Zhu S.-Y."/>
            <person name="Li W.-X."/>
        </authorList>
    </citation>
    <scope>NUCLEOTIDE SEQUENCE [MRNA]</scope>
    <source>
        <tissue>Venom gland</tissue>
    </source>
</reference>
<reference key="3">
    <citation type="submission" date="2004-06" db="EMBL/GenBank/DDBJ databases">
        <authorList>
            <person name="Luo F."/>
            <person name="Li W.X."/>
            <person name="Zeng X.C."/>
        </authorList>
    </citation>
    <scope>NUCLEOTIDE SEQUENCE [GENOMIC DNA]</scope>
</reference>
<reference key="4">
    <citation type="journal article" date="2003" name="Toxicon">
        <title>BmKK4, a novel toxin from the venom of Asian scorpion Buthus martensi Karsch, inhibits potassium currents in rat hippocampal neurons in vitro.</title>
        <authorList>
            <person name="Li M.-H."/>
            <person name="Zhang N.-X."/>
            <person name="Chen X.-Q."/>
            <person name="Wu G."/>
            <person name="Wu H.-M."/>
            <person name="Hu G.-Y."/>
        </authorList>
    </citation>
    <scope>PROTEIN SEQUENCE OF 24-55</scope>
    <scope>FUNCTION</scope>
    <scope>AMIDATION AT THR-53</scope>
    <source>
        <tissue>Venom</tissue>
    </source>
</reference>
<reference key="5">
    <citation type="journal article" date="2004" name="Biochemistry">
        <title>Solution structure of BmKK4, the first member of subfamily alpha-KTx 17 of scorpion toxins.</title>
        <authorList>
            <person name="Zhang N.-X."/>
            <person name="Chen X."/>
            <person name="Li M.-H."/>
            <person name="Cao C."/>
            <person name="Wang Y."/>
            <person name="Wu G."/>
            <person name="Hu G.-Y."/>
            <person name="Wu H.-M."/>
        </authorList>
    </citation>
    <scope>STRUCTURE BY NMR OF 24-53</scope>
    <scope>PYROGLUTAMATE FORMATION AT GLN-24</scope>
    <scope>DISULFIDE BONDS</scope>
</reference>
<sequence>MKFIIVLILISVLIATIVPVNEAQTQCQSVRDCQQYCLTPDRCSYGTCYCKTTGK</sequence>
<accession>Q95NJ8</accession>
<accession>Q3L666</accession>